<accession>Q5GTD2</accession>
<dbReference type="EC" id="6.3.4.19" evidence="1"/>
<dbReference type="EMBL" id="AE017321">
    <property type="protein sequence ID" value="AAW70742.1"/>
    <property type="molecule type" value="Genomic_DNA"/>
</dbReference>
<dbReference type="RefSeq" id="WP_011256352.1">
    <property type="nucleotide sequence ID" value="NC_006833.1"/>
</dbReference>
<dbReference type="SMR" id="Q5GTD2"/>
<dbReference type="STRING" id="292805.Wbm0151"/>
<dbReference type="KEGG" id="wbm:Wbm0151"/>
<dbReference type="eggNOG" id="COG0037">
    <property type="taxonomic scope" value="Bacteria"/>
</dbReference>
<dbReference type="HOGENOM" id="CLU_018869_3_2_5"/>
<dbReference type="Proteomes" id="UP000000534">
    <property type="component" value="Chromosome"/>
</dbReference>
<dbReference type="GO" id="GO:0005737">
    <property type="term" value="C:cytoplasm"/>
    <property type="evidence" value="ECO:0007669"/>
    <property type="project" value="UniProtKB-SubCell"/>
</dbReference>
<dbReference type="GO" id="GO:0005524">
    <property type="term" value="F:ATP binding"/>
    <property type="evidence" value="ECO:0007669"/>
    <property type="project" value="UniProtKB-UniRule"/>
</dbReference>
<dbReference type="GO" id="GO:0032267">
    <property type="term" value="F:tRNA(Ile)-lysidine synthase activity"/>
    <property type="evidence" value="ECO:0007669"/>
    <property type="project" value="UniProtKB-EC"/>
</dbReference>
<dbReference type="GO" id="GO:0006400">
    <property type="term" value="P:tRNA modification"/>
    <property type="evidence" value="ECO:0007669"/>
    <property type="project" value="UniProtKB-UniRule"/>
</dbReference>
<dbReference type="CDD" id="cd01992">
    <property type="entry name" value="TilS_N"/>
    <property type="match status" value="1"/>
</dbReference>
<dbReference type="Gene3D" id="3.40.50.620">
    <property type="entry name" value="HUPs"/>
    <property type="match status" value="1"/>
</dbReference>
<dbReference type="HAMAP" id="MF_01161">
    <property type="entry name" value="tRNA_Ile_lys_synt"/>
    <property type="match status" value="1"/>
</dbReference>
<dbReference type="InterPro" id="IPR014729">
    <property type="entry name" value="Rossmann-like_a/b/a_fold"/>
</dbReference>
<dbReference type="InterPro" id="IPR011063">
    <property type="entry name" value="TilS/TtcA_N"/>
</dbReference>
<dbReference type="InterPro" id="IPR012094">
    <property type="entry name" value="tRNA_Ile_lys_synt"/>
</dbReference>
<dbReference type="InterPro" id="IPR012795">
    <property type="entry name" value="tRNA_Ile_lys_synt_N"/>
</dbReference>
<dbReference type="NCBIfam" id="TIGR02432">
    <property type="entry name" value="lysidine_TilS_N"/>
    <property type="match status" value="1"/>
</dbReference>
<dbReference type="PANTHER" id="PTHR43033">
    <property type="entry name" value="TRNA(ILE)-LYSIDINE SYNTHASE-RELATED"/>
    <property type="match status" value="1"/>
</dbReference>
<dbReference type="PANTHER" id="PTHR43033:SF1">
    <property type="entry name" value="TRNA(ILE)-LYSIDINE SYNTHASE-RELATED"/>
    <property type="match status" value="1"/>
</dbReference>
<dbReference type="Pfam" id="PF01171">
    <property type="entry name" value="ATP_bind_3"/>
    <property type="match status" value="1"/>
</dbReference>
<dbReference type="SUPFAM" id="SSF52402">
    <property type="entry name" value="Adenine nucleotide alpha hydrolases-like"/>
    <property type="match status" value="1"/>
</dbReference>
<gene>
    <name evidence="1" type="primary">tilS</name>
    <name type="ordered locus">Wbm0151</name>
</gene>
<sequence length="431" mass="49491">MELESLFQDIMDGFAVYNNKVAVAVSGGIDSIVLLHLITSWAEKRQCPPPIALAVNHGLRPESQEEVEFVVSYAKELGVKKSFILNWKRQNIKGNVQSQARKARYELLTEWCKNNDVKHLFIAHHKDDQAETFLLRLERGSGLDGLSSMDYKSSLNGVCMLRPLLSFSRSRIKKYADFYRLKWVEDRSNQSLKYKRTLYRNLLKASGNQEILTERICLTTLHIKRATKALMHYTRLAFNDCVNVHDLGYIEIKLSEFYKLPEEIALRLLLYSIMVISSKHYKPRYNSLIAIFNKVLQKDNDVHCTLSGCKIRKYGESILIIRESSKIQEISVSLPLNAPIEWDNRFSCTILGNQECSVTIAPLKKTQKIPKFLKDYDCCPEVFYSLPVVLKDGKVLAYLHLNHDRKNINGDEVQCIINSTIKQNLVILAGI</sequence>
<name>TILS_WOLTR</name>
<protein>
    <recommendedName>
        <fullName evidence="1">tRNA(Ile)-lysidine synthase</fullName>
        <ecNumber evidence="1">6.3.4.19</ecNumber>
    </recommendedName>
    <alternativeName>
        <fullName evidence="1">tRNA(Ile)-2-lysyl-cytidine synthase</fullName>
    </alternativeName>
    <alternativeName>
        <fullName evidence="1">tRNA(Ile)-lysidine synthetase</fullName>
    </alternativeName>
</protein>
<feature type="chain" id="PRO_1000164342" description="tRNA(Ile)-lysidine synthase">
    <location>
        <begin position="1"/>
        <end position="431"/>
    </location>
</feature>
<feature type="binding site" evidence="1">
    <location>
        <begin position="26"/>
        <end position="31"/>
    </location>
    <ligand>
        <name>ATP</name>
        <dbReference type="ChEBI" id="CHEBI:30616"/>
    </ligand>
</feature>
<keyword id="KW-0067">ATP-binding</keyword>
<keyword id="KW-0963">Cytoplasm</keyword>
<keyword id="KW-0436">Ligase</keyword>
<keyword id="KW-0547">Nucleotide-binding</keyword>
<keyword id="KW-1185">Reference proteome</keyword>
<keyword id="KW-0819">tRNA processing</keyword>
<evidence type="ECO:0000255" key="1">
    <source>
        <dbReference type="HAMAP-Rule" id="MF_01161"/>
    </source>
</evidence>
<proteinExistence type="inferred from homology"/>
<organism>
    <name type="scientific">Wolbachia sp. subsp. Brugia malayi (strain TRS)</name>
    <dbReference type="NCBI Taxonomy" id="292805"/>
    <lineage>
        <taxon>Bacteria</taxon>
        <taxon>Pseudomonadati</taxon>
        <taxon>Pseudomonadota</taxon>
        <taxon>Alphaproteobacteria</taxon>
        <taxon>Rickettsiales</taxon>
        <taxon>Anaplasmataceae</taxon>
        <taxon>Wolbachieae</taxon>
        <taxon>Wolbachia</taxon>
    </lineage>
</organism>
<reference key="1">
    <citation type="journal article" date="2005" name="PLoS Biol.">
        <title>The Wolbachia genome of Brugia malayi: endosymbiont evolution within a human pathogenic nematode.</title>
        <authorList>
            <person name="Foster J."/>
            <person name="Ganatra M."/>
            <person name="Kamal I."/>
            <person name="Ware J."/>
            <person name="Makarova K."/>
            <person name="Ivanova N."/>
            <person name="Bhattacharyya A."/>
            <person name="Kapatral V."/>
            <person name="Kumar S."/>
            <person name="Posfai J."/>
            <person name="Vincze T."/>
            <person name="Ingram J."/>
            <person name="Moran L."/>
            <person name="Lapidus A."/>
            <person name="Omelchenko M."/>
            <person name="Kyrpides N."/>
            <person name="Ghedin E."/>
            <person name="Wang S."/>
            <person name="Goltsman E."/>
            <person name="Joukov V."/>
            <person name="Ostrovskaya O."/>
            <person name="Tsukerman K."/>
            <person name="Mazur M."/>
            <person name="Comb D."/>
            <person name="Koonin E."/>
            <person name="Slatko B."/>
        </authorList>
    </citation>
    <scope>NUCLEOTIDE SEQUENCE [LARGE SCALE GENOMIC DNA]</scope>
    <source>
        <strain>TRS</strain>
    </source>
</reference>
<comment type="function">
    <text evidence="1">Ligates lysine onto the cytidine present at position 34 of the AUA codon-specific tRNA(Ile) that contains the anticodon CAU, in an ATP-dependent manner. Cytidine is converted to lysidine, thus changing the amino acid specificity of the tRNA from methionine to isoleucine.</text>
</comment>
<comment type="catalytic activity">
    <reaction evidence="1">
        <text>cytidine(34) in tRNA(Ile2) + L-lysine + ATP = lysidine(34) in tRNA(Ile2) + AMP + diphosphate + H(+)</text>
        <dbReference type="Rhea" id="RHEA:43744"/>
        <dbReference type="Rhea" id="RHEA-COMP:10625"/>
        <dbReference type="Rhea" id="RHEA-COMP:10670"/>
        <dbReference type="ChEBI" id="CHEBI:15378"/>
        <dbReference type="ChEBI" id="CHEBI:30616"/>
        <dbReference type="ChEBI" id="CHEBI:32551"/>
        <dbReference type="ChEBI" id="CHEBI:33019"/>
        <dbReference type="ChEBI" id="CHEBI:82748"/>
        <dbReference type="ChEBI" id="CHEBI:83665"/>
        <dbReference type="ChEBI" id="CHEBI:456215"/>
        <dbReference type="EC" id="6.3.4.19"/>
    </reaction>
</comment>
<comment type="subcellular location">
    <subcellularLocation>
        <location evidence="1">Cytoplasm</location>
    </subcellularLocation>
</comment>
<comment type="domain">
    <text>The N-terminal region contains the highly conserved SGGXDS motif, predicted to be a P-loop motif involved in ATP binding.</text>
</comment>
<comment type="similarity">
    <text evidence="1">Belongs to the tRNA(Ile)-lysidine synthase family.</text>
</comment>